<organism>
    <name type="scientific">Mycobacterium marinum (strain ATCC BAA-535 / M)</name>
    <dbReference type="NCBI Taxonomy" id="216594"/>
    <lineage>
        <taxon>Bacteria</taxon>
        <taxon>Bacillati</taxon>
        <taxon>Actinomycetota</taxon>
        <taxon>Actinomycetes</taxon>
        <taxon>Mycobacteriales</taxon>
        <taxon>Mycobacteriaceae</taxon>
        <taxon>Mycobacterium</taxon>
        <taxon>Mycobacterium ulcerans group</taxon>
    </lineage>
</organism>
<proteinExistence type="inferred from homology"/>
<keyword id="KW-0489">Methyltransferase</keyword>
<keyword id="KW-1185">Reference proteome</keyword>
<keyword id="KW-0808">Transferase</keyword>
<sequence>MAVTDRFARRATLSRSLRLLSEFRYEQPDPARFYGALAADTATLVSDLWLAARGESVAGRTLLDVGGGPGYFASAFAAAGVGYIGVEPDPNEMHAAGPAHAGGPGSFVRASGMALPFADDSVDICLSSNVAEHVPRPWQLGAEMLRVTRPGGLAVLSYTVWLGPFGGHEMGLSHYLGGARAAARYARRHGHPAKNNYGSSLFAVSAAEGLRWAEGTGTLIAAFPRYHPRWAWWMTSVPMLREFLVSNLVLVLSPR</sequence>
<name>Y473_MYCMM</name>
<reference key="1">
    <citation type="journal article" date="2008" name="Genome Res.">
        <title>Insights from the complete genome sequence of Mycobacterium marinum on the evolution of Mycobacterium tuberculosis.</title>
        <authorList>
            <person name="Stinear T.P."/>
            <person name="Seemann T."/>
            <person name="Harrison P.F."/>
            <person name="Jenkin G.A."/>
            <person name="Davies J.K."/>
            <person name="Johnson P.D."/>
            <person name="Abdellah Z."/>
            <person name="Arrowsmith C."/>
            <person name="Chillingworth T."/>
            <person name="Churcher C."/>
            <person name="Clarke K."/>
            <person name="Cronin A."/>
            <person name="Davis P."/>
            <person name="Goodhead I."/>
            <person name="Holroyd N."/>
            <person name="Jagels K."/>
            <person name="Lord A."/>
            <person name="Moule S."/>
            <person name="Mungall K."/>
            <person name="Norbertczak H."/>
            <person name="Quail M.A."/>
            <person name="Rabbinowitsch E."/>
            <person name="Walker D."/>
            <person name="White B."/>
            <person name="Whitehead S."/>
            <person name="Small P.L."/>
            <person name="Brosch R."/>
            <person name="Ramakrishnan L."/>
            <person name="Fischbach M.A."/>
            <person name="Parkhill J."/>
            <person name="Cole S.T."/>
        </authorList>
    </citation>
    <scope>NUCLEOTIDE SEQUENCE [LARGE SCALE GENOMIC DNA]</scope>
    <source>
        <strain>ATCC BAA-535 / M</strain>
    </source>
</reference>
<gene>
    <name type="ordered locus">MMAR_0473</name>
</gene>
<dbReference type="EC" id="2.1.1.-"/>
<dbReference type="EMBL" id="CP000854">
    <property type="protein sequence ID" value="ACC38938.1"/>
    <property type="molecule type" value="Genomic_DNA"/>
</dbReference>
<dbReference type="RefSeq" id="WP_012392445.1">
    <property type="nucleotide sequence ID" value="NC_010612.1"/>
</dbReference>
<dbReference type="STRING" id="216594.MMAR_0473"/>
<dbReference type="GeneID" id="34341799"/>
<dbReference type="KEGG" id="mmi:MMAR_0473"/>
<dbReference type="eggNOG" id="COG0500">
    <property type="taxonomic scope" value="Bacteria"/>
</dbReference>
<dbReference type="HOGENOM" id="CLU_073035_0_0_11"/>
<dbReference type="OrthoDB" id="3206826at2"/>
<dbReference type="Proteomes" id="UP000001190">
    <property type="component" value="Chromosome"/>
</dbReference>
<dbReference type="GO" id="GO:0008757">
    <property type="term" value="F:S-adenosylmethionine-dependent methyltransferase activity"/>
    <property type="evidence" value="ECO:0007669"/>
    <property type="project" value="InterPro"/>
</dbReference>
<dbReference type="GO" id="GO:0032259">
    <property type="term" value="P:methylation"/>
    <property type="evidence" value="ECO:0007669"/>
    <property type="project" value="UniProtKB-KW"/>
</dbReference>
<dbReference type="CDD" id="cd02440">
    <property type="entry name" value="AdoMet_MTases"/>
    <property type="match status" value="1"/>
</dbReference>
<dbReference type="Gene3D" id="3.40.50.150">
    <property type="entry name" value="Vaccinia Virus protein VP39"/>
    <property type="match status" value="1"/>
</dbReference>
<dbReference type="InterPro" id="IPR013216">
    <property type="entry name" value="Methyltransf_11"/>
</dbReference>
<dbReference type="InterPro" id="IPR029063">
    <property type="entry name" value="SAM-dependent_MTases_sf"/>
</dbReference>
<dbReference type="PANTHER" id="PTHR43591:SF24">
    <property type="entry name" value="2-METHOXY-6-POLYPRENYL-1,4-BENZOQUINOL METHYLASE, MITOCHONDRIAL"/>
    <property type="match status" value="1"/>
</dbReference>
<dbReference type="PANTHER" id="PTHR43591">
    <property type="entry name" value="METHYLTRANSFERASE"/>
    <property type="match status" value="1"/>
</dbReference>
<dbReference type="Pfam" id="PF08241">
    <property type="entry name" value="Methyltransf_11"/>
    <property type="match status" value="1"/>
</dbReference>
<dbReference type="SUPFAM" id="SSF53335">
    <property type="entry name" value="S-adenosyl-L-methionine-dependent methyltransferases"/>
    <property type="match status" value="1"/>
</dbReference>
<protein>
    <recommendedName>
        <fullName>Uncharacterized methyltransferase MMAR_0473</fullName>
        <ecNumber>2.1.1.-</ecNumber>
    </recommendedName>
</protein>
<feature type="chain" id="PRO_0000380603" description="Uncharacterized methyltransferase MMAR_0473">
    <location>
        <begin position="1"/>
        <end position="255"/>
    </location>
</feature>
<accession>B2HMZ9</accession>
<evidence type="ECO:0000305" key="1"/>
<comment type="similarity">
    <text evidence="1">Belongs to the methyltransferase superfamily.</text>
</comment>